<reference key="1">
    <citation type="journal article" date="2011" name="Proc. Natl. Acad. Sci. U.S.A.">
        <title>Genomic anatomy of Escherichia coli O157:H7 outbreaks.</title>
        <authorList>
            <person name="Eppinger M."/>
            <person name="Mammel M.K."/>
            <person name="Leclerc J.E."/>
            <person name="Ravel J."/>
            <person name="Cebula T.A."/>
        </authorList>
    </citation>
    <scope>NUCLEOTIDE SEQUENCE [LARGE SCALE GENOMIC DNA]</scope>
    <source>
        <strain>EC4115 / EHEC</strain>
    </source>
</reference>
<organism>
    <name type="scientific">Escherichia coli O157:H7 (strain EC4115 / EHEC)</name>
    <dbReference type="NCBI Taxonomy" id="444450"/>
    <lineage>
        <taxon>Bacteria</taxon>
        <taxon>Pseudomonadati</taxon>
        <taxon>Pseudomonadota</taxon>
        <taxon>Gammaproteobacteria</taxon>
        <taxon>Enterobacterales</taxon>
        <taxon>Enterobacteriaceae</taxon>
        <taxon>Escherichia</taxon>
    </lineage>
</organism>
<sequence length="314" mass="34196">MHAYLHCLSHSPLVGYVDPAQEVLDEVNGVIASARERIAAFSPELVVLFAPDHYNGFFYDVMPPFCLGVGATAIGDFGSAAGELPVPVELAEACAHAVMKSGIDLAVSYCMQVDHGFAQPLEFLLGGLDKVPVLPVFINGVATPLPGFQRTRMLGEAIGRFTSTLNKRVLFLGSGGLSHQPPVPELAKADAHMRDRLLGSGKDLPASERELRQQRVISAAEKFVEDQRTLHPLNPIWDNQFMTLLEQGRIQELDAVSNEELSAIAGKSTHEIKTWVAAFAAISAFGNWRSEGRYYRPIPEWIAGFGSLSARTEN</sequence>
<proteinExistence type="inferred from homology"/>
<name>MHPB_ECO5E</name>
<gene>
    <name evidence="1" type="primary">mhpB</name>
    <name type="ordered locus">ECH74115_0423</name>
</gene>
<comment type="function">
    <text evidence="1">Catalyzes the non-heme iron(II)-dependent oxidative cleavage of 2,3-dihydroxyphenylpropionic acid and 2,3-dihydroxicinnamic acid into 2-hydroxy-6-ketononadienedioate and 2-hydroxy-6-ketononatrienedioate, respectively.</text>
</comment>
<comment type="catalytic activity">
    <reaction evidence="1">
        <text>3-(2,3-dihydroxyphenyl)propanoate + O2 = (2Z,4E)-2-hydroxy-6-oxonona-2,4-dienedioate + H(+)</text>
        <dbReference type="Rhea" id="RHEA:23840"/>
        <dbReference type="ChEBI" id="CHEBI:15378"/>
        <dbReference type="ChEBI" id="CHEBI:15379"/>
        <dbReference type="ChEBI" id="CHEBI:46951"/>
        <dbReference type="ChEBI" id="CHEBI:66887"/>
        <dbReference type="EC" id="1.13.11.16"/>
    </reaction>
</comment>
<comment type="catalytic activity">
    <reaction evidence="1">
        <text>(2E)-3-(2,3-dihydroxyphenyl)prop-2-enoate + O2 = (2Z,4E,7E)-2-hydroxy-6-oxonona-2,4,7-trienedioate + H(+)</text>
        <dbReference type="Rhea" id="RHEA:25054"/>
        <dbReference type="ChEBI" id="CHEBI:15378"/>
        <dbReference type="ChEBI" id="CHEBI:15379"/>
        <dbReference type="ChEBI" id="CHEBI:58642"/>
        <dbReference type="ChEBI" id="CHEBI:66888"/>
        <dbReference type="EC" id="1.13.11.16"/>
    </reaction>
</comment>
<comment type="cofactor">
    <cofactor evidence="1">
        <name>Fe(2+)</name>
        <dbReference type="ChEBI" id="CHEBI:29033"/>
    </cofactor>
</comment>
<comment type="pathway">
    <text evidence="1">Aromatic compound metabolism; 3-phenylpropanoate degradation.</text>
</comment>
<comment type="subunit">
    <text evidence="1">Homotetramer.</text>
</comment>
<comment type="similarity">
    <text evidence="1">Belongs to the LigB/MhpB extradiol dioxygenase family.</text>
</comment>
<feature type="chain" id="PRO_1000187001" description="2,3-dihydroxyphenylpropionate/2,3-dihydroxicinnamic acid 1,2-dioxygenase">
    <location>
        <begin position="1"/>
        <end position="314"/>
    </location>
</feature>
<feature type="active site" description="Proton donor" evidence="1">
    <location>
        <position position="115"/>
    </location>
</feature>
<feature type="active site" description="Proton acceptor" evidence="1">
    <location>
        <position position="179"/>
    </location>
</feature>
<dbReference type="EC" id="1.13.11.16" evidence="1"/>
<dbReference type="EMBL" id="CP001164">
    <property type="protein sequence ID" value="ACI37890.1"/>
    <property type="molecule type" value="Genomic_DNA"/>
</dbReference>
<dbReference type="RefSeq" id="WP_000543457.1">
    <property type="nucleotide sequence ID" value="NC_011353.1"/>
</dbReference>
<dbReference type="SMR" id="B5Z2Q3"/>
<dbReference type="GeneID" id="93777107"/>
<dbReference type="KEGG" id="ecf:ECH74115_0423"/>
<dbReference type="HOGENOM" id="CLU_078149_0_0_6"/>
<dbReference type="UniPathway" id="UPA00714"/>
<dbReference type="GO" id="GO:0047070">
    <property type="term" value="F:3-carboxyethylcatechol 2,3-dioxygenase activity"/>
    <property type="evidence" value="ECO:0007669"/>
    <property type="project" value="UniProtKB-UniRule"/>
</dbReference>
<dbReference type="GO" id="GO:0008198">
    <property type="term" value="F:ferrous iron binding"/>
    <property type="evidence" value="ECO:0007669"/>
    <property type="project" value="InterPro"/>
</dbReference>
<dbReference type="GO" id="GO:0019380">
    <property type="term" value="P:3-phenylpropionate catabolic process"/>
    <property type="evidence" value="ECO:0007669"/>
    <property type="project" value="UniProtKB-UniRule"/>
</dbReference>
<dbReference type="CDD" id="cd07365">
    <property type="entry name" value="MhpB_like"/>
    <property type="match status" value="1"/>
</dbReference>
<dbReference type="Gene3D" id="3.40.830.10">
    <property type="entry name" value="LigB-like"/>
    <property type="match status" value="1"/>
</dbReference>
<dbReference type="HAMAP" id="MF_01653">
    <property type="entry name" value="MhpB"/>
    <property type="match status" value="1"/>
</dbReference>
<dbReference type="InterPro" id="IPR023789">
    <property type="entry name" value="DHPP/DHXA_dioxygenase"/>
</dbReference>
<dbReference type="InterPro" id="IPR004183">
    <property type="entry name" value="Xdiol_dOase_suB"/>
</dbReference>
<dbReference type="NCBIfam" id="NF009907">
    <property type="entry name" value="PRK13370.1-1"/>
    <property type="match status" value="1"/>
</dbReference>
<dbReference type="NCBIfam" id="NF009910">
    <property type="entry name" value="PRK13370.1-4"/>
    <property type="match status" value="1"/>
</dbReference>
<dbReference type="Pfam" id="PF02900">
    <property type="entry name" value="LigB"/>
    <property type="match status" value="1"/>
</dbReference>
<dbReference type="SUPFAM" id="SSF53213">
    <property type="entry name" value="LigB-like"/>
    <property type="match status" value="1"/>
</dbReference>
<accession>B5Z2Q3</accession>
<keyword id="KW-0058">Aromatic hydrocarbons catabolism</keyword>
<keyword id="KW-0223">Dioxygenase</keyword>
<keyword id="KW-0408">Iron</keyword>
<keyword id="KW-0560">Oxidoreductase</keyword>
<evidence type="ECO:0000255" key="1">
    <source>
        <dbReference type="HAMAP-Rule" id="MF_01653"/>
    </source>
</evidence>
<protein>
    <recommendedName>
        <fullName evidence="1">2,3-dihydroxyphenylpropionate/2,3-dihydroxicinnamic acid 1,2-dioxygenase</fullName>
        <ecNumber evidence="1">1.13.11.16</ecNumber>
    </recommendedName>
    <alternativeName>
        <fullName evidence="1">3-carboxyethylcatechol 2,3-dioxygenase</fullName>
    </alternativeName>
</protein>